<sequence length="134" mass="14419">MNKSFEIGTLLLRVITGIIFFVHGLSKFQGMEGTIQFFGSIGLPSFMAYVIAAIELIGGVLVFFGLATRIVGVLFALTLIGAIITVKLKAPFMGNAEFDYLLLLTSIHLALTGSRFLALDPFVFKGKKNGNVSA</sequence>
<keyword id="KW-0058">Aromatic hydrocarbons catabolism</keyword>
<keyword id="KW-1003">Cell membrane</keyword>
<keyword id="KW-0216">Detoxification</keyword>
<keyword id="KW-0472">Membrane</keyword>
<keyword id="KW-0560">Oxidoreductase</keyword>
<keyword id="KW-1185">Reference proteome</keyword>
<keyword id="KW-0812">Transmembrane</keyword>
<keyword id="KW-1133">Transmembrane helix</keyword>
<proteinExistence type="evidence at transcript level"/>
<feature type="chain" id="PRO_0000049524" description="Putative oxidoreductase CatD">
    <location>
        <begin position="1"/>
        <end position="134"/>
    </location>
</feature>
<feature type="transmembrane region" description="Helical" evidence="1">
    <location>
        <begin position="5"/>
        <end position="25"/>
    </location>
</feature>
<feature type="transmembrane region" description="Helical" evidence="1">
    <location>
        <begin position="46"/>
        <end position="66"/>
    </location>
</feature>
<feature type="transmembrane region" description="Helical" evidence="1">
    <location>
        <begin position="70"/>
        <end position="90"/>
    </location>
</feature>
<feature type="transmembrane region" description="Helical" evidence="1">
    <location>
        <begin position="91"/>
        <end position="111"/>
    </location>
</feature>
<reference key="1">
    <citation type="journal article" date="1996" name="Microbiology">
        <title>Determination of a 12 kb nucleotide sequence around the 76 degrees region of the Bacillus subtilis chromosome.</title>
        <authorList>
            <person name="Yamamoto H."/>
            <person name="Uchiyama S."/>
            <person name="Fajar A.N."/>
            <person name="Ogasawara N."/>
            <person name="Sekiguchi J."/>
        </authorList>
    </citation>
    <scope>NUCLEOTIDE SEQUENCE [GENOMIC DNA]</scope>
    <source>
        <strain>168</strain>
    </source>
</reference>
<reference key="2">
    <citation type="journal article" date="1997" name="Nature">
        <title>The complete genome sequence of the Gram-positive bacterium Bacillus subtilis.</title>
        <authorList>
            <person name="Kunst F."/>
            <person name="Ogasawara N."/>
            <person name="Moszer I."/>
            <person name="Albertini A.M."/>
            <person name="Alloni G."/>
            <person name="Azevedo V."/>
            <person name="Bertero M.G."/>
            <person name="Bessieres P."/>
            <person name="Bolotin A."/>
            <person name="Borchert S."/>
            <person name="Borriss R."/>
            <person name="Boursier L."/>
            <person name="Brans A."/>
            <person name="Braun M."/>
            <person name="Brignell S.C."/>
            <person name="Bron S."/>
            <person name="Brouillet S."/>
            <person name="Bruschi C.V."/>
            <person name="Caldwell B."/>
            <person name="Capuano V."/>
            <person name="Carter N.M."/>
            <person name="Choi S.-K."/>
            <person name="Codani J.-J."/>
            <person name="Connerton I.F."/>
            <person name="Cummings N.J."/>
            <person name="Daniel R.A."/>
            <person name="Denizot F."/>
            <person name="Devine K.M."/>
            <person name="Duesterhoeft A."/>
            <person name="Ehrlich S.D."/>
            <person name="Emmerson P.T."/>
            <person name="Entian K.-D."/>
            <person name="Errington J."/>
            <person name="Fabret C."/>
            <person name="Ferrari E."/>
            <person name="Foulger D."/>
            <person name="Fritz C."/>
            <person name="Fujita M."/>
            <person name="Fujita Y."/>
            <person name="Fuma S."/>
            <person name="Galizzi A."/>
            <person name="Galleron N."/>
            <person name="Ghim S.-Y."/>
            <person name="Glaser P."/>
            <person name="Goffeau A."/>
            <person name="Golightly E.J."/>
            <person name="Grandi G."/>
            <person name="Guiseppi G."/>
            <person name="Guy B.J."/>
            <person name="Haga K."/>
            <person name="Haiech J."/>
            <person name="Harwood C.R."/>
            <person name="Henaut A."/>
            <person name="Hilbert H."/>
            <person name="Holsappel S."/>
            <person name="Hosono S."/>
            <person name="Hullo M.-F."/>
            <person name="Itaya M."/>
            <person name="Jones L.-M."/>
            <person name="Joris B."/>
            <person name="Karamata D."/>
            <person name="Kasahara Y."/>
            <person name="Klaerr-Blanchard M."/>
            <person name="Klein C."/>
            <person name="Kobayashi Y."/>
            <person name="Koetter P."/>
            <person name="Koningstein G."/>
            <person name="Krogh S."/>
            <person name="Kumano M."/>
            <person name="Kurita K."/>
            <person name="Lapidus A."/>
            <person name="Lardinois S."/>
            <person name="Lauber J."/>
            <person name="Lazarevic V."/>
            <person name="Lee S.-M."/>
            <person name="Levine A."/>
            <person name="Liu H."/>
            <person name="Masuda S."/>
            <person name="Mauel C."/>
            <person name="Medigue C."/>
            <person name="Medina N."/>
            <person name="Mellado R.P."/>
            <person name="Mizuno M."/>
            <person name="Moestl D."/>
            <person name="Nakai S."/>
            <person name="Noback M."/>
            <person name="Noone D."/>
            <person name="O'Reilly M."/>
            <person name="Ogawa K."/>
            <person name="Ogiwara A."/>
            <person name="Oudega B."/>
            <person name="Park S.-H."/>
            <person name="Parro V."/>
            <person name="Pohl T.M."/>
            <person name="Portetelle D."/>
            <person name="Porwollik S."/>
            <person name="Prescott A.M."/>
            <person name="Presecan E."/>
            <person name="Pujic P."/>
            <person name="Purnelle B."/>
            <person name="Rapoport G."/>
            <person name="Rey M."/>
            <person name="Reynolds S."/>
            <person name="Rieger M."/>
            <person name="Rivolta C."/>
            <person name="Rocha E."/>
            <person name="Roche B."/>
            <person name="Rose M."/>
            <person name="Sadaie Y."/>
            <person name="Sato T."/>
            <person name="Scanlan E."/>
            <person name="Schleich S."/>
            <person name="Schroeter R."/>
            <person name="Scoffone F."/>
            <person name="Sekiguchi J."/>
            <person name="Sekowska A."/>
            <person name="Seror S.J."/>
            <person name="Serror P."/>
            <person name="Shin B.-S."/>
            <person name="Soldo B."/>
            <person name="Sorokin A."/>
            <person name="Tacconi E."/>
            <person name="Takagi T."/>
            <person name="Takahashi H."/>
            <person name="Takemaru K."/>
            <person name="Takeuchi M."/>
            <person name="Tamakoshi A."/>
            <person name="Tanaka T."/>
            <person name="Terpstra P."/>
            <person name="Tognoni A."/>
            <person name="Tosato V."/>
            <person name="Uchiyama S."/>
            <person name="Vandenbol M."/>
            <person name="Vannier F."/>
            <person name="Vassarotti A."/>
            <person name="Viari A."/>
            <person name="Wambutt R."/>
            <person name="Wedler E."/>
            <person name="Wedler H."/>
            <person name="Weitzenegger T."/>
            <person name="Winters P."/>
            <person name="Wipat A."/>
            <person name="Yamamoto H."/>
            <person name="Yamane K."/>
            <person name="Yasumoto K."/>
            <person name="Yata K."/>
            <person name="Yoshida K."/>
            <person name="Yoshikawa H.-F."/>
            <person name="Zumstein E."/>
            <person name="Yoshikawa H."/>
            <person name="Danchin A."/>
        </authorList>
    </citation>
    <scope>NUCLEOTIDE SEQUENCE [LARGE SCALE GENOMIC DNA]</scope>
    <source>
        <strain>168</strain>
    </source>
</reference>
<reference key="3">
    <citation type="journal article" date="2006" name="Environ. Microbiol.">
        <title>Differential gene expression in response to phenol and catechol reveals different metabolic activities for the degradation of aromatic compounds in Bacillus subtilis.</title>
        <authorList>
            <person name="Tam le T."/>
            <person name="Eymann C."/>
            <person name="Albrecht D."/>
            <person name="Sietmann R."/>
            <person name="Schauer F."/>
            <person name="Hecker M."/>
            <person name="Antelmann H."/>
        </authorList>
    </citation>
    <scope>FUNCTION</scope>
    <scope>INDUCTION</scope>
    <source>
        <strain>168</strain>
    </source>
</reference>
<reference key="4">
    <citation type="journal article" date="2007" name="Proteomics">
        <title>Transcriptome and proteome analyses in response to 2-methylhydroquinone and 6-brom-2-vinyl-chroman-4-on reveal different degradation systems involved in the catabolism of aromatic compounds in Bacillus subtilis.</title>
        <authorList>
            <person name="Nguyen V.D."/>
            <person name="Wolf C."/>
            <person name="Maeder U."/>
            <person name="Lalk M."/>
            <person name="Langer P."/>
            <person name="Lindequist U."/>
            <person name="Hecker M."/>
            <person name="Antelmann H."/>
        </authorList>
    </citation>
    <scope>INDUCTION</scope>
    <scope>NOMENCLATURE</scope>
    <source>
        <strain>168</strain>
    </source>
</reference>
<organism>
    <name type="scientific">Bacillus subtilis (strain 168)</name>
    <dbReference type="NCBI Taxonomy" id="224308"/>
    <lineage>
        <taxon>Bacteria</taxon>
        <taxon>Bacillati</taxon>
        <taxon>Bacillota</taxon>
        <taxon>Bacilli</taxon>
        <taxon>Bacillales</taxon>
        <taxon>Bacillaceae</taxon>
        <taxon>Bacillus</taxon>
    </lineage>
</organism>
<evidence type="ECO:0000255" key="1"/>
<evidence type="ECO:0000269" key="2">
    <source>
    </source>
</evidence>
<evidence type="ECO:0000269" key="3">
    <source>
    </source>
</evidence>
<evidence type="ECO:0000305" key="4"/>
<comment type="function">
    <text evidence="2">Essential for growth and viability in the presence of catechol and probably involved in the detoxification of catechol.</text>
</comment>
<comment type="subcellular location">
    <subcellularLocation>
        <location evidence="4">Cell membrane</location>
        <topology evidence="4">Multi-pass membrane protein</topology>
    </subcellularLocation>
</comment>
<comment type="induction">
    <text evidence="2 3">Strongly induced by catechol, less strongly by 2-methylhydroquinone (2-MHQ) but only weakly by chromanon (6-brom-2-vinyl-chroman-4-on).</text>
</comment>
<comment type="similarity">
    <text evidence="4">Belongs to the DoxX family.</text>
</comment>
<accession>P54720</accession>
<dbReference type="EC" id="1.-.-.-"/>
<dbReference type="EMBL" id="D50543">
    <property type="protein sequence ID" value="BAA09108.1"/>
    <property type="molecule type" value="Genomic_DNA"/>
</dbReference>
<dbReference type="EMBL" id="AL009126">
    <property type="protein sequence ID" value="CAB12652.1"/>
    <property type="molecule type" value="Genomic_DNA"/>
</dbReference>
<dbReference type="PIR" id="G69802">
    <property type="entry name" value="G69802"/>
</dbReference>
<dbReference type="RefSeq" id="NP_388704.1">
    <property type="nucleotide sequence ID" value="NC_000964.3"/>
</dbReference>
<dbReference type="RefSeq" id="WP_003244204.1">
    <property type="nucleotide sequence ID" value="NZ_OZ025638.1"/>
</dbReference>
<dbReference type="SMR" id="P54720"/>
<dbReference type="FunCoup" id="P54720">
    <property type="interactions" value="44"/>
</dbReference>
<dbReference type="STRING" id="224308.BSU08230"/>
<dbReference type="PaxDb" id="224308-BSU08230"/>
<dbReference type="EnsemblBacteria" id="CAB12652">
    <property type="protein sequence ID" value="CAB12652"/>
    <property type="gene ID" value="BSU_08230"/>
</dbReference>
<dbReference type="GeneID" id="939204"/>
<dbReference type="KEGG" id="bsu:BSU08230"/>
<dbReference type="PATRIC" id="fig|224308.179.peg.889"/>
<dbReference type="eggNOG" id="COG2259">
    <property type="taxonomic scope" value="Bacteria"/>
</dbReference>
<dbReference type="InParanoid" id="P54720"/>
<dbReference type="OrthoDB" id="886570at2"/>
<dbReference type="PhylomeDB" id="P54720"/>
<dbReference type="BioCyc" id="BSUB:BSU08230-MONOMER"/>
<dbReference type="Proteomes" id="UP000001570">
    <property type="component" value="Chromosome"/>
</dbReference>
<dbReference type="GO" id="GO:0005886">
    <property type="term" value="C:plasma membrane"/>
    <property type="evidence" value="ECO:0000318"/>
    <property type="project" value="GO_Central"/>
</dbReference>
<dbReference type="GO" id="GO:0016491">
    <property type="term" value="F:oxidoreductase activity"/>
    <property type="evidence" value="ECO:0007669"/>
    <property type="project" value="UniProtKB-KW"/>
</dbReference>
<dbReference type="GO" id="GO:0009056">
    <property type="term" value="P:catabolic process"/>
    <property type="evidence" value="ECO:0007669"/>
    <property type="project" value="UniProtKB-KW"/>
</dbReference>
<dbReference type="GO" id="GO:0009636">
    <property type="term" value="P:response to toxic substance"/>
    <property type="evidence" value="ECO:0007669"/>
    <property type="project" value="UniProtKB-KW"/>
</dbReference>
<dbReference type="InterPro" id="IPR032808">
    <property type="entry name" value="DoxX"/>
</dbReference>
<dbReference type="InterPro" id="IPR051907">
    <property type="entry name" value="DoxX-like_oxidoreductase"/>
</dbReference>
<dbReference type="PANTHER" id="PTHR33452:SF1">
    <property type="entry name" value="INNER MEMBRANE PROTEIN YPHA-RELATED"/>
    <property type="match status" value="1"/>
</dbReference>
<dbReference type="PANTHER" id="PTHR33452">
    <property type="entry name" value="OXIDOREDUCTASE CATD-RELATED"/>
    <property type="match status" value="1"/>
</dbReference>
<dbReference type="Pfam" id="PF07681">
    <property type="entry name" value="DoxX"/>
    <property type="match status" value="1"/>
</dbReference>
<name>CATD_BACSU</name>
<gene>
    <name type="primary">catD</name>
    <name type="synonym">yfiD</name>
    <name type="ordered locus">BSU08230</name>
</gene>
<protein>
    <recommendedName>
        <fullName>Putative oxidoreductase CatD</fullName>
        <ecNumber>1.-.-.-</ecNumber>
    </recommendedName>
</protein>